<sequence length="186" mass="21494">MLALINRLLDWFKSLFWKEEMELTLVGLQYSGKTTFVNVIASGQFSEDMIPTVGFNMRKVTKGNVTIKIWDIGGQPRFRSMWERYCRGVNAIVYMVDAADREKVEASRNELHNLLDKPQLQGIPVLVLGNKRDLPNALDEKQLIEKMNLAAIQDREICCYSISCKEKDNIDITLQWLIQHSKSRRS</sequence>
<organism>
    <name type="scientific">Danio rerio</name>
    <name type="common">Zebrafish</name>
    <name type="synonym">Brachydanio rerio</name>
    <dbReference type="NCBI Taxonomy" id="7955"/>
    <lineage>
        <taxon>Eukaryota</taxon>
        <taxon>Metazoa</taxon>
        <taxon>Chordata</taxon>
        <taxon>Craniata</taxon>
        <taxon>Vertebrata</taxon>
        <taxon>Euteleostomi</taxon>
        <taxon>Actinopterygii</taxon>
        <taxon>Neopterygii</taxon>
        <taxon>Teleostei</taxon>
        <taxon>Ostariophysi</taxon>
        <taxon>Cypriniformes</taxon>
        <taxon>Danionidae</taxon>
        <taxon>Danioninae</taxon>
        <taxon>Danio</taxon>
    </lineage>
</organism>
<keyword id="KW-0131">Cell cycle</keyword>
<keyword id="KW-0132">Cell division</keyword>
<keyword id="KW-0159">Chromosome partition</keyword>
<keyword id="KW-0963">Cytoplasm</keyword>
<keyword id="KW-0206">Cytoskeleton</keyword>
<keyword id="KW-0967">Endosome</keyword>
<keyword id="KW-0342">GTP-binding</keyword>
<keyword id="KW-0458">Lysosome</keyword>
<keyword id="KW-0472">Membrane</keyword>
<keyword id="KW-0498">Mitosis</keyword>
<keyword id="KW-0547">Nucleotide-binding</keyword>
<keyword id="KW-1185">Reference proteome</keyword>
<feature type="chain" id="PRO_0000232926" description="ADP-ribosylation factor-like protein 8B-A">
    <location>
        <begin position="1"/>
        <end position="186"/>
    </location>
</feature>
<feature type="intramembrane region" description="Note=Mediates targeting to membranes" evidence="3">
    <location>
        <begin position="1"/>
        <end position="19"/>
    </location>
</feature>
<feature type="binding site" evidence="3">
    <location>
        <begin position="29"/>
        <end position="35"/>
    </location>
    <ligand>
        <name>GTP</name>
        <dbReference type="ChEBI" id="CHEBI:37565"/>
    </ligand>
</feature>
<feature type="binding site" evidence="1">
    <location>
        <begin position="71"/>
        <end position="75"/>
    </location>
    <ligand>
        <name>GTP</name>
        <dbReference type="ChEBI" id="CHEBI:37565"/>
    </ligand>
</feature>
<feature type="binding site" evidence="3">
    <location>
        <begin position="130"/>
        <end position="133"/>
    </location>
    <ligand>
        <name>GTP</name>
        <dbReference type="ChEBI" id="CHEBI:37565"/>
    </ligand>
</feature>
<proteinExistence type="evidence at transcript level"/>
<protein>
    <recommendedName>
        <fullName>ADP-ribosylation factor-like protein 8B-A</fullName>
    </recommendedName>
</protein>
<dbReference type="EMBL" id="BC065942">
    <property type="protein sequence ID" value="AAH65942.1"/>
    <property type="molecule type" value="mRNA"/>
</dbReference>
<dbReference type="RefSeq" id="NP_991129.1">
    <property type="nucleotide sequence ID" value="NM_205566.1"/>
</dbReference>
<dbReference type="SMR" id="Q6NZW8"/>
<dbReference type="FunCoup" id="Q6NZW8">
    <property type="interactions" value="2197"/>
</dbReference>
<dbReference type="STRING" id="7955.ENSDARP00000019311"/>
<dbReference type="PaxDb" id="7955-ENSDARP00000019311"/>
<dbReference type="Ensembl" id="ENSDART00000014552">
    <property type="protein sequence ID" value="ENSDARP00000019311"/>
    <property type="gene ID" value="ENSDARG00000006915"/>
</dbReference>
<dbReference type="GeneID" id="337424"/>
<dbReference type="KEGG" id="dre:337424"/>
<dbReference type="AGR" id="ZFIN:ZDB-GENE-030131-9370"/>
<dbReference type="CTD" id="337424"/>
<dbReference type="ZFIN" id="ZDB-GENE-030131-9370">
    <property type="gene designation" value="arl8ba"/>
</dbReference>
<dbReference type="eggNOG" id="KOG0075">
    <property type="taxonomic scope" value="Eukaryota"/>
</dbReference>
<dbReference type="HOGENOM" id="CLU_040729_10_0_1"/>
<dbReference type="InParanoid" id="Q6NZW8"/>
<dbReference type="OMA" id="FRNMWER"/>
<dbReference type="OrthoDB" id="2011769at2759"/>
<dbReference type="PhylomeDB" id="Q6NZW8"/>
<dbReference type="TreeFam" id="TF105470"/>
<dbReference type="PRO" id="PR:Q6NZW8"/>
<dbReference type="Proteomes" id="UP000000437">
    <property type="component" value="Chromosome 6"/>
</dbReference>
<dbReference type="Bgee" id="ENSDARG00000006915">
    <property type="expression patterns" value="Expressed in spleen and 27 other cell types or tissues"/>
</dbReference>
<dbReference type="ExpressionAtlas" id="Q6NZW8">
    <property type="expression patterns" value="baseline"/>
</dbReference>
<dbReference type="GO" id="GO:1904115">
    <property type="term" value="C:axon cytoplasm"/>
    <property type="evidence" value="ECO:0007669"/>
    <property type="project" value="GOC"/>
</dbReference>
<dbReference type="GO" id="GO:0031901">
    <property type="term" value="C:early endosome membrane"/>
    <property type="evidence" value="ECO:0007669"/>
    <property type="project" value="UniProtKB-SubCell"/>
</dbReference>
<dbReference type="GO" id="GO:0031902">
    <property type="term" value="C:late endosome membrane"/>
    <property type="evidence" value="ECO:0007669"/>
    <property type="project" value="UniProtKB-SubCell"/>
</dbReference>
<dbReference type="GO" id="GO:0005765">
    <property type="term" value="C:lysosomal membrane"/>
    <property type="evidence" value="ECO:0000318"/>
    <property type="project" value="GO_Central"/>
</dbReference>
<dbReference type="GO" id="GO:0005764">
    <property type="term" value="C:lysosome"/>
    <property type="evidence" value="ECO:0000250"/>
    <property type="project" value="UniProtKB"/>
</dbReference>
<dbReference type="GO" id="GO:0005819">
    <property type="term" value="C:spindle"/>
    <property type="evidence" value="ECO:0007669"/>
    <property type="project" value="UniProtKB-SubCell"/>
</dbReference>
<dbReference type="GO" id="GO:0005525">
    <property type="term" value="F:GTP binding"/>
    <property type="evidence" value="ECO:0007669"/>
    <property type="project" value="UniProtKB-KW"/>
</dbReference>
<dbReference type="GO" id="GO:0003924">
    <property type="term" value="F:GTPase activity"/>
    <property type="evidence" value="ECO:0007669"/>
    <property type="project" value="InterPro"/>
</dbReference>
<dbReference type="GO" id="GO:0008089">
    <property type="term" value="P:anterograde axonal transport"/>
    <property type="evidence" value="ECO:0000318"/>
    <property type="project" value="GO_Central"/>
</dbReference>
<dbReference type="GO" id="GO:0061909">
    <property type="term" value="P:autophagosome-lysosome fusion"/>
    <property type="evidence" value="ECO:0000250"/>
    <property type="project" value="UniProtKB"/>
</dbReference>
<dbReference type="GO" id="GO:0051301">
    <property type="term" value="P:cell division"/>
    <property type="evidence" value="ECO:0007669"/>
    <property type="project" value="UniProtKB-KW"/>
</dbReference>
<dbReference type="GO" id="GO:0007059">
    <property type="term" value="P:chromosome segregation"/>
    <property type="evidence" value="ECO:0007669"/>
    <property type="project" value="UniProtKB-KW"/>
</dbReference>
<dbReference type="GO" id="GO:1902774">
    <property type="term" value="P:late endosome to lysosome transport"/>
    <property type="evidence" value="ECO:0000250"/>
    <property type="project" value="UniProtKB"/>
</dbReference>
<dbReference type="GO" id="GO:0032418">
    <property type="term" value="P:lysosome localization"/>
    <property type="evidence" value="ECO:0000250"/>
    <property type="project" value="UniProtKB"/>
</dbReference>
<dbReference type="GO" id="GO:0015031">
    <property type="term" value="P:protein transport"/>
    <property type="evidence" value="ECO:0007669"/>
    <property type="project" value="InterPro"/>
</dbReference>
<dbReference type="CDD" id="cd04159">
    <property type="entry name" value="Arl10_like"/>
    <property type="match status" value="1"/>
</dbReference>
<dbReference type="FunFam" id="3.40.50.300:FF:000247">
    <property type="entry name" value="ADP-ribosylation factor-like GTPase 8A"/>
    <property type="match status" value="1"/>
</dbReference>
<dbReference type="Gene3D" id="3.40.50.300">
    <property type="entry name" value="P-loop containing nucleotide triphosphate hydrolases"/>
    <property type="match status" value="1"/>
</dbReference>
<dbReference type="InterPro" id="IPR044154">
    <property type="entry name" value="Arl8a/8b"/>
</dbReference>
<dbReference type="InterPro" id="IPR027417">
    <property type="entry name" value="P-loop_NTPase"/>
</dbReference>
<dbReference type="InterPro" id="IPR005225">
    <property type="entry name" value="Small_GTP-bd"/>
</dbReference>
<dbReference type="InterPro" id="IPR006689">
    <property type="entry name" value="Small_GTPase_ARF/SAR"/>
</dbReference>
<dbReference type="NCBIfam" id="TIGR00231">
    <property type="entry name" value="small_GTP"/>
    <property type="match status" value="1"/>
</dbReference>
<dbReference type="PANTHER" id="PTHR45732">
    <property type="entry name" value="ADP-RIBOSYLATION FACTOR-LIKE PROTEIN 8"/>
    <property type="match status" value="1"/>
</dbReference>
<dbReference type="PANTHER" id="PTHR45732:SF13">
    <property type="entry name" value="ADP-RIBOSYLATION FACTOR-LIKE PROTEIN 8B"/>
    <property type="match status" value="1"/>
</dbReference>
<dbReference type="Pfam" id="PF00025">
    <property type="entry name" value="Arf"/>
    <property type="match status" value="1"/>
</dbReference>
<dbReference type="PRINTS" id="PR00328">
    <property type="entry name" value="SAR1GTPBP"/>
</dbReference>
<dbReference type="SMART" id="SM00177">
    <property type="entry name" value="ARF"/>
    <property type="match status" value="1"/>
</dbReference>
<dbReference type="SMART" id="SM00175">
    <property type="entry name" value="RAB"/>
    <property type="match status" value="1"/>
</dbReference>
<dbReference type="SMART" id="SM00178">
    <property type="entry name" value="SAR"/>
    <property type="match status" value="1"/>
</dbReference>
<dbReference type="SUPFAM" id="SSF52540">
    <property type="entry name" value="P-loop containing nucleoside triphosphate hydrolases"/>
    <property type="match status" value="1"/>
</dbReference>
<dbReference type="PROSITE" id="PS51417">
    <property type="entry name" value="ARF"/>
    <property type="match status" value="1"/>
</dbReference>
<comment type="function">
    <text evidence="2 3">Small GTPase which cycles between active GTP-bound and inactive GDP-bound states. In its active state, binds to a variety of effector proteins playing a key role in the regulation of lysosomal positioning which is important for nutrient sensing, natural killer cell-mediated cytotoxicity and antigen presentation. Along with its effectors, orchestrates lysosomal transport and fusion.</text>
</comment>
<comment type="subcellular location">
    <subcellularLocation>
        <location evidence="3">Late endosome membrane</location>
    </subcellularLocation>
    <subcellularLocation>
        <location evidence="3">Lysosome membrane</location>
    </subcellularLocation>
    <subcellularLocation>
        <location evidence="3">Cytoplasm</location>
        <location evidence="3">Cytoskeleton</location>
        <location evidence="3">Spindle</location>
    </subcellularLocation>
    <subcellularLocation>
        <location evidence="3">Early endosome membrane</location>
    </subcellularLocation>
    <text evidence="3">Localizes with microtubules at the spindle mid-zone during mitosis.</text>
</comment>
<comment type="similarity">
    <text evidence="4">Belongs to the small GTPase superfamily. Arf family.</text>
</comment>
<gene>
    <name type="primary">arl8ba</name>
    <name type="synonym">arl8b</name>
    <name type="ORF">zgc:77187</name>
</gene>
<accession>Q6NZW8</accession>
<reference key="1">
    <citation type="submission" date="2004-02" db="EMBL/GenBank/DDBJ databases">
        <authorList>
            <consortium name="NIH - Zebrafish Gene Collection (ZGC) project"/>
        </authorList>
    </citation>
    <scope>NUCLEOTIDE SEQUENCE [LARGE SCALE MRNA]</scope>
    <source>
        <tissue>Kidney</tissue>
    </source>
</reference>
<evidence type="ECO:0000250" key="1">
    <source>
        <dbReference type="UniProtKB" id="P62330"/>
    </source>
</evidence>
<evidence type="ECO:0000250" key="2">
    <source>
        <dbReference type="UniProtKB" id="Q9CQW2"/>
    </source>
</evidence>
<evidence type="ECO:0000250" key="3">
    <source>
        <dbReference type="UniProtKB" id="Q9NVJ2"/>
    </source>
</evidence>
<evidence type="ECO:0000305" key="4"/>
<name>AR8BA_DANRE</name>